<feature type="chain" id="PRO_0000255062" description="Cytochrome b">
    <location>
        <begin position="1"/>
        <end position="381"/>
    </location>
</feature>
<feature type="transmembrane region" description="Helical" evidence="2">
    <location>
        <begin position="33"/>
        <end position="53"/>
    </location>
</feature>
<feature type="transmembrane region" description="Helical" evidence="2">
    <location>
        <begin position="77"/>
        <end position="98"/>
    </location>
</feature>
<feature type="transmembrane region" description="Helical" evidence="2">
    <location>
        <begin position="113"/>
        <end position="133"/>
    </location>
</feature>
<feature type="transmembrane region" description="Helical" evidence="2">
    <location>
        <begin position="178"/>
        <end position="198"/>
    </location>
</feature>
<feature type="transmembrane region" description="Helical" evidence="2">
    <location>
        <begin position="226"/>
        <end position="246"/>
    </location>
</feature>
<feature type="transmembrane region" description="Helical" evidence="2">
    <location>
        <begin position="288"/>
        <end position="308"/>
    </location>
</feature>
<feature type="transmembrane region" description="Helical" evidence="2">
    <location>
        <begin position="320"/>
        <end position="340"/>
    </location>
</feature>
<feature type="transmembrane region" description="Helical" evidence="2">
    <location>
        <begin position="347"/>
        <end position="367"/>
    </location>
</feature>
<feature type="binding site" description="axial binding residue" evidence="2">
    <location>
        <position position="83"/>
    </location>
    <ligand>
        <name>heme b</name>
        <dbReference type="ChEBI" id="CHEBI:60344"/>
        <label>b562</label>
    </ligand>
    <ligandPart>
        <name>Fe</name>
        <dbReference type="ChEBI" id="CHEBI:18248"/>
    </ligandPart>
</feature>
<feature type="binding site" description="axial binding residue" evidence="2">
    <location>
        <position position="97"/>
    </location>
    <ligand>
        <name>heme b</name>
        <dbReference type="ChEBI" id="CHEBI:60344"/>
        <label>b566</label>
    </ligand>
    <ligandPart>
        <name>Fe</name>
        <dbReference type="ChEBI" id="CHEBI:18248"/>
    </ligandPart>
</feature>
<feature type="binding site" description="axial binding residue" evidence="2">
    <location>
        <position position="182"/>
    </location>
    <ligand>
        <name>heme b</name>
        <dbReference type="ChEBI" id="CHEBI:60344"/>
        <label>b562</label>
    </ligand>
    <ligandPart>
        <name>Fe</name>
        <dbReference type="ChEBI" id="CHEBI:18248"/>
    </ligandPart>
</feature>
<feature type="binding site" description="axial binding residue" evidence="2">
    <location>
        <position position="196"/>
    </location>
    <ligand>
        <name>heme b</name>
        <dbReference type="ChEBI" id="CHEBI:60344"/>
        <label>b566</label>
    </ligand>
    <ligandPart>
        <name>Fe</name>
        <dbReference type="ChEBI" id="CHEBI:18248"/>
    </ligandPart>
</feature>
<feature type="binding site" evidence="2">
    <location>
        <position position="201"/>
    </location>
    <ligand>
        <name>a ubiquinone</name>
        <dbReference type="ChEBI" id="CHEBI:16389"/>
    </ligand>
</feature>
<reference key="1">
    <citation type="journal article" date="1999" name="J. Mammal. Evol.">
        <title>Phylogenetic relationships and the radiation of Sigmodontine rodents in South America: evidence from cytochrome b.</title>
        <authorList>
            <person name="Smith M.F."/>
            <person name="Patton J.L."/>
        </authorList>
    </citation>
    <scope>NUCLEOTIDE SEQUENCE [GENOMIC DNA]</scope>
</reference>
<keyword id="KW-0249">Electron transport</keyword>
<keyword id="KW-0349">Heme</keyword>
<keyword id="KW-0408">Iron</keyword>
<keyword id="KW-0472">Membrane</keyword>
<keyword id="KW-0479">Metal-binding</keyword>
<keyword id="KW-0496">Mitochondrion</keyword>
<keyword id="KW-0999">Mitochondrion inner membrane</keyword>
<keyword id="KW-0679">Respiratory chain</keyword>
<keyword id="KW-0812">Transmembrane</keyword>
<keyword id="KW-1133">Transmembrane helix</keyword>
<keyword id="KW-0813">Transport</keyword>
<keyword id="KW-0830">Ubiquinone</keyword>
<dbReference type="EMBL" id="AF108670">
    <property type="protein sequence ID" value="AAD45452.1"/>
    <property type="molecule type" value="Genomic_DNA"/>
</dbReference>
<dbReference type="SMR" id="Q9XNX4"/>
<dbReference type="GO" id="GO:0005743">
    <property type="term" value="C:mitochondrial inner membrane"/>
    <property type="evidence" value="ECO:0007669"/>
    <property type="project" value="UniProtKB-SubCell"/>
</dbReference>
<dbReference type="GO" id="GO:0045275">
    <property type="term" value="C:respiratory chain complex III"/>
    <property type="evidence" value="ECO:0007669"/>
    <property type="project" value="InterPro"/>
</dbReference>
<dbReference type="GO" id="GO:0046872">
    <property type="term" value="F:metal ion binding"/>
    <property type="evidence" value="ECO:0007669"/>
    <property type="project" value="UniProtKB-KW"/>
</dbReference>
<dbReference type="GO" id="GO:0008121">
    <property type="term" value="F:ubiquinol-cytochrome-c reductase activity"/>
    <property type="evidence" value="ECO:0007669"/>
    <property type="project" value="InterPro"/>
</dbReference>
<dbReference type="GO" id="GO:0006122">
    <property type="term" value="P:mitochondrial electron transport, ubiquinol to cytochrome c"/>
    <property type="evidence" value="ECO:0007669"/>
    <property type="project" value="TreeGrafter"/>
</dbReference>
<dbReference type="CDD" id="cd00290">
    <property type="entry name" value="cytochrome_b_C"/>
    <property type="match status" value="1"/>
</dbReference>
<dbReference type="CDD" id="cd00284">
    <property type="entry name" value="Cytochrome_b_N"/>
    <property type="match status" value="1"/>
</dbReference>
<dbReference type="FunFam" id="1.20.810.10:FF:000002">
    <property type="entry name" value="Cytochrome b"/>
    <property type="match status" value="1"/>
</dbReference>
<dbReference type="Gene3D" id="1.20.810.10">
    <property type="entry name" value="Cytochrome Bc1 Complex, Chain C"/>
    <property type="match status" value="1"/>
</dbReference>
<dbReference type="InterPro" id="IPR005798">
    <property type="entry name" value="Cyt_b/b6_C"/>
</dbReference>
<dbReference type="InterPro" id="IPR036150">
    <property type="entry name" value="Cyt_b/b6_C_sf"/>
</dbReference>
<dbReference type="InterPro" id="IPR005797">
    <property type="entry name" value="Cyt_b/b6_N"/>
</dbReference>
<dbReference type="InterPro" id="IPR027387">
    <property type="entry name" value="Cytb/b6-like_sf"/>
</dbReference>
<dbReference type="InterPro" id="IPR030689">
    <property type="entry name" value="Cytochrome_b"/>
</dbReference>
<dbReference type="InterPro" id="IPR048260">
    <property type="entry name" value="Cytochrome_b_C_euk/bac"/>
</dbReference>
<dbReference type="InterPro" id="IPR048259">
    <property type="entry name" value="Cytochrome_b_N_euk/bac"/>
</dbReference>
<dbReference type="InterPro" id="IPR016174">
    <property type="entry name" value="Di-haem_cyt_TM"/>
</dbReference>
<dbReference type="PANTHER" id="PTHR19271">
    <property type="entry name" value="CYTOCHROME B"/>
    <property type="match status" value="1"/>
</dbReference>
<dbReference type="PANTHER" id="PTHR19271:SF16">
    <property type="entry name" value="CYTOCHROME B"/>
    <property type="match status" value="1"/>
</dbReference>
<dbReference type="Pfam" id="PF00032">
    <property type="entry name" value="Cytochrom_B_C"/>
    <property type="match status" value="1"/>
</dbReference>
<dbReference type="Pfam" id="PF00033">
    <property type="entry name" value="Cytochrome_B"/>
    <property type="match status" value="1"/>
</dbReference>
<dbReference type="PIRSF" id="PIRSF038885">
    <property type="entry name" value="COB"/>
    <property type="match status" value="1"/>
</dbReference>
<dbReference type="SUPFAM" id="SSF81648">
    <property type="entry name" value="a domain/subunit of cytochrome bc1 complex (Ubiquinol-cytochrome c reductase)"/>
    <property type="match status" value="1"/>
</dbReference>
<dbReference type="SUPFAM" id="SSF81342">
    <property type="entry name" value="Transmembrane di-heme cytochromes"/>
    <property type="match status" value="1"/>
</dbReference>
<dbReference type="PROSITE" id="PS51003">
    <property type="entry name" value="CYTB_CTER"/>
    <property type="match status" value="1"/>
</dbReference>
<dbReference type="PROSITE" id="PS51002">
    <property type="entry name" value="CYTB_NTER"/>
    <property type="match status" value="1"/>
</dbReference>
<geneLocation type="mitochondrion"/>
<protein>
    <recommendedName>
        <fullName>Cytochrome b</fullName>
    </recommendedName>
    <alternativeName>
        <fullName>Complex III subunit 3</fullName>
    </alternativeName>
    <alternativeName>
        <fullName>Complex III subunit III</fullName>
    </alternativeName>
    <alternativeName>
        <fullName>Cytochrome b-c1 complex subunit 3</fullName>
    </alternativeName>
    <alternativeName>
        <fullName>Ubiquinol-cytochrome-c reductase complex cytochrome b subunit</fullName>
    </alternativeName>
</protein>
<name>CYB_KUNTO</name>
<proteinExistence type="inferred from homology"/>
<gene>
    <name type="primary">MT-CYB</name>
    <name type="synonym">COB</name>
    <name type="synonym">CYTB</name>
    <name type="synonym">MTCYB</name>
</gene>
<organism>
    <name type="scientific">Kunsia tomentosus</name>
    <name type="common">Woolly giant rat</name>
    <dbReference type="NCBI Taxonomy" id="89121"/>
    <lineage>
        <taxon>Eukaryota</taxon>
        <taxon>Metazoa</taxon>
        <taxon>Chordata</taxon>
        <taxon>Craniata</taxon>
        <taxon>Vertebrata</taxon>
        <taxon>Euteleostomi</taxon>
        <taxon>Mammalia</taxon>
        <taxon>Eutheria</taxon>
        <taxon>Euarchontoglires</taxon>
        <taxon>Glires</taxon>
        <taxon>Rodentia</taxon>
        <taxon>Myomorpha</taxon>
        <taxon>Muroidea</taxon>
        <taxon>Cricetidae</taxon>
        <taxon>Sigmodontinae</taxon>
        <taxon>Kunsia</taxon>
    </lineage>
</organism>
<sequence length="381" mass="43018">MTIMRKSHPLLKIMNHSFIDLPTPSNISSWWNFGSLLGICLMIQILTGLFLAMHYTSDTTTAFSSVAHICRDVNYGWLIRYLHANGASMFFICLFIHVGRGIYYGSYTLRETWNIGILLLFTTMATAFVGYVLPWGQMSFWGATVITNLLSAIPYIGTTLVEWIWGGFSVDKATLTRFFAFHFILPFIITALVLVHLLFLHETGSNNPSGLNSDSDKIPFHPYYTIKDLLGIFLLLTVLMTLTLFFPDLLGDPDNFTPANPLNTPAHIKPEWYFLFAYAILRSIPNKLGGVLALILSILILAAFPLLNPSKQHGLAYRPITQTLYWIFIANILILTWIGGQPVEYPFTTIGQVSSILYFAIIIIFMPIASMIENNILKLHF</sequence>
<comment type="function">
    <text evidence="2">Component of the ubiquinol-cytochrome c reductase complex (complex III or cytochrome b-c1 complex) that is part of the mitochondrial respiratory chain. The b-c1 complex mediates electron transfer from ubiquinol to cytochrome c. Contributes to the generation of a proton gradient across the mitochondrial membrane that is then used for ATP synthesis.</text>
</comment>
<comment type="cofactor">
    <cofactor evidence="2">
        <name>heme b</name>
        <dbReference type="ChEBI" id="CHEBI:60344"/>
    </cofactor>
    <text evidence="2">Binds 2 heme b groups non-covalently.</text>
</comment>
<comment type="subunit">
    <text evidence="2">The cytochrome bc1 complex contains 11 subunits: 3 respiratory subunits (MT-CYB, CYC1 and UQCRFS1), 2 core proteins (UQCRC1 and UQCRC2) and 6 low-molecular weight proteins (UQCRH/QCR6, UQCRB/QCR7, UQCRQ/QCR8, UQCR10/QCR9, UQCR11/QCR10 and a cleavage product of UQCRFS1). This cytochrome bc1 complex then forms a dimer.</text>
</comment>
<comment type="subcellular location">
    <subcellularLocation>
        <location evidence="2">Mitochondrion inner membrane</location>
        <topology evidence="2">Multi-pass membrane protein</topology>
    </subcellularLocation>
</comment>
<comment type="miscellaneous">
    <text evidence="1">Heme 1 (or BL or b562) is low-potential and absorbs at about 562 nm, and heme 2 (or BH or b566) is high-potential and absorbs at about 566 nm.</text>
</comment>
<comment type="similarity">
    <text evidence="3 4">Belongs to the cytochrome b family.</text>
</comment>
<comment type="caution">
    <text evidence="2">The full-length protein contains only eight transmembrane helices, not nine as predicted by bioinformatics tools.</text>
</comment>
<evidence type="ECO:0000250" key="1"/>
<evidence type="ECO:0000250" key="2">
    <source>
        <dbReference type="UniProtKB" id="P00157"/>
    </source>
</evidence>
<evidence type="ECO:0000255" key="3">
    <source>
        <dbReference type="PROSITE-ProRule" id="PRU00967"/>
    </source>
</evidence>
<evidence type="ECO:0000255" key="4">
    <source>
        <dbReference type="PROSITE-ProRule" id="PRU00968"/>
    </source>
</evidence>
<accession>Q9XNX4</accession>